<reference key="1">
    <citation type="journal article" date="2005" name="Genome Res.">
        <title>Complete genome sequence of the hyperthermophilic archaeon Thermococcus kodakaraensis KOD1 and comparison with Pyrococcus genomes.</title>
        <authorList>
            <person name="Fukui T."/>
            <person name="Atomi H."/>
            <person name="Kanai T."/>
            <person name="Matsumi R."/>
            <person name="Fujiwara S."/>
            <person name="Imanaka T."/>
        </authorList>
    </citation>
    <scope>NUCLEOTIDE SEQUENCE [LARGE SCALE GENOMIC DNA]</scope>
    <source>
        <strain>ATCC BAA-918 / JCM 12380 / KOD1</strain>
    </source>
</reference>
<feature type="chain" id="PRO_0000150055" description="UPF0127 protein TK1120">
    <location>
        <begin position="1"/>
        <end position="157"/>
    </location>
</feature>
<proteinExistence type="inferred from homology"/>
<dbReference type="EMBL" id="AP006878">
    <property type="protein sequence ID" value="BAD85309.1"/>
    <property type="molecule type" value="Genomic_DNA"/>
</dbReference>
<dbReference type="RefSeq" id="WP_011250071.1">
    <property type="nucleotide sequence ID" value="NC_006624.1"/>
</dbReference>
<dbReference type="SMR" id="Q5JE64"/>
<dbReference type="STRING" id="69014.TK1120"/>
<dbReference type="EnsemblBacteria" id="BAD85309">
    <property type="protein sequence ID" value="BAD85309"/>
    <property type="gene ID" value="TK1120"/>
</dbReference>
<dbReference type="GeneID" id="78447634"/>
<dbReference type="KEGG" id="tko:TK1120"/>
<dbReference type="PATRIC" id="fig|69014.16.peg.1097"/>
<dbReference type="eggNOG" id="arCOG03113">
    <property type="taxonomic scope" value="Archaea"/>
</dbReference>
<dbReference type="HOGENOM" id="CLU_097039_4_2_2"/>
<dbReference type="InParanoid" id="Q5JE64"/>
<dbReference type="OrthoDB" id="64208at2157"/>
<dbReference type="PhylomeDB" id="Q5JE64"/>
<dbReference type="Proteomes" id="UP000000536">
    <property type="component" value="Chromosome"/>
</dbReference>
<dbReference type="Gene3D" id="2.60.120.1140">
    <property type="entry name" value="Protein of unknown function DUF192"/>
    <property type="match status" value="1"/>
</dbReference>
<dbReference type="HAMAP" id="MF_00263">
    <property type="entry name" value="UPF0127"/>
    <property type="match status" value="1"/>
</dbReference>
<dbReference type="InterPro" id="IPR003795">
    <property type="entry name" value="DUF192"/>
</dbReference>
<dbReference type="InterPro" id="IPR038695">
    <property type="entry name" value="Saro_0823-like_sf"/>
</dbReference>
<dbReference type="InterPro" id="IPR022906">
    <property type="entry name" value="UPF0127"/>
</dbReference>
<dbReference type="NCBIfam" id="NF002996">
    <property type="entry name" value="PRK03760.1"/>
    <property type="match status" value="1"/>
</dbReference>
<dbReference type="Pfam" id="PF02643">
    <property type="entry name" value="DUF192"/>
    <property type="match status" value="1"/>
</dbReference>
<protein>
    <recommendedName>
        <fullName evidence="1">UPF0127 protein TK1120</fullName>
    </recommendedName>
</protein>
<comment type="similarity">
    <text evidence="1">Belongs to the UPF0127 family.</text>
</comment>
<organism>
    <name type="scientific">Thermococcus kodakarensis (strain ATCC BAA-918 / JCM 12380 / KOD1)</name>
    <name type="common">Pyrococcus kodakaraensis (strain KOD1)</name>
    <dbReference type="NCBI Taxonomy" id="69014"/>
    <lineage>
        <taxon>Archaea</taxon>
        <taxon>Methanobacteriati</taxon>
        <taxon>Methanobacteriota</taxon>
        <taxon>Thermococci</taxon>
        <taxon>Thermococcales</taxon>
        <taxon>Thermococcaceae</taxon>
        <taxon>Thermococcus</taxon>
    </lineage>
</organism>
<keyword id="KW-1185">Reference proteome</keyword>
<accession>Q5JE64</accession>
<name>Y1120_THEKO</name>
<evidence type="ECO:0000255" key="1">
    <source>
        <dbReference type="HAMAP-Rule" id="MF_00263"/>
    </source>
</evidence>
<gene>
    <name type="ordered locus">TK1120</name>
</gene>
<sequence length="157" mass="17762">MIINETKGKAWHGKVKLADTFLKRFRGLMLVKNVNHALVFVLPAETRANASIHMFFMLSDIDVIWLDSSRRVVDFKTAKKWRLYTPKKAAQYIIEGPVGLIRTLEVEEGDLISWTPTEEREKAVPVKSLIPGKINLNGSKNSIAMVESVKEVKANEV</sequence>